<protein>
    <recommendedName>
        <fullName>Uncharacterized 12.4 kDa protein in nrdA-td intergenic region</fullName>
    </recommendedName>
</protein>
<proteinExistence type="predicted"/>
<dbReference type="EMBL" id="J03968">
    <property type="status" value="NOT_ANNOTATED_CDS"/>
    <property type="molecule type" value="Genomic_DNA"/>
</dbReference>
<dbReference type="EMBL" id="AF158101">
    <property type="protein sequence ID" value="AAD42622.1"/>
    <property type="molecule type" value="Genomic_DNA"/>
</dbReference>
<dbReference type="RefSeq" id="NP_049846.1">
    <property type="nucleotide sequence ID" value="NC_000866.4"/>
</dbReference>
<dbReference type="GeneID" id="1258707"/>
<dbReference type="KEGG" id="vg:1258707"/>
<dbReference type="OrthoDB" id="19153at10239"/>
<dbReference type="Proteomes" id="UP000009087">
    <property type="component" value="Segment"/>
</dbReference>
<dbReference type="InterPro" id="IPR025475">
    <property type="entry name" value="DUF4326"/>
</dbReference>
<dbReference type="Pfam" id="PF14216">
    <property type="entry name" value="DUF4326"/>
    <property type="match status" value="1"/>
</dbReference>
<keyword id="KW-1185">Reference proteome</keyword>
<reference key="1">
    <citation type="journal article" date="1988" name="J. Biol. Chem.">
        <title>Total sequence, flanking regions, and transcripts of bacteriophage T4 nrdA gene, coding for alpha chain of ribonucleoside diphosphate reductase.</title>
        <authorList>
            <person name="Tseng M.J."/>
            <person name="Hilfinger J.M."/>
            <person name="Walsh A."/>
            <person name="Greenberg G.R."/>
        </authorList>
    </citation>
    <scope>NUCLEOTIDE SEQUENCE [GENOMIC DNA]</scope>
</reference>
<reference key="2">
    <citation type="journal article" date="2003" name="Microbiol. Mol. Biol. Rev.">
        <title>Bacteriophage T4 genome.</title>
        <authorList>
            <person name="Miller E.S."/>
            <person name="Kutter E."/>
            <person name="Mosig G."/>
            <person name="Arisaka F."/>
            <person name="Kunisawa T."/>
            <person name="Ruger W."/>
        </authorList>
    </citation>
    <scope>NUCLEOTIDE SEQUENCE [LARGE SCALE GENOMIC DNA]</scope>
</reference>
<feature type="chain" id="PRO_0000165186" description="Uncharacterized 12.4 kDa protein in nrdA-td intergenic region">
    <location>
        <begin position="1"/>
        <end position="108"/>
    </location>
</feature>
<organism>
    <name type="scientific">Enterobacteria phage T4</name>
    <name type="common">Bacteriophage T4</name>
    <dbReference type="NCBI Taxonomy" id="10665"/>
    <lineage>
        <taxon>Viruses</taxon>
        <taxon>Duplodnaviria</taxon>
        <taxon>Heunggongvirae</taxon>
        <taxon>Uroviricota</taxon>
        <taxon>Caudoviricetes</taxon>
        <taxon>Straboviridae</taxon>
        <taxon>Tevenvirinae</taxon>
        <taxon>Tequatrovirus</taxon>
    </lineage>
</organism>
<name>Y14A_BPT4</name>
<accession>P32279</accession>
<gene>
    <name type="primary">y14A</name>
    <name type="synonym">nrdA.1</name>
</gene>
<organismHost>
    <name type="scientific">Escherichia coli</name>
    <dbReference type="NCBI Taxonomy" id="562"/>
</organismHost>
<sequence length="108" mass="12361">MTNYSSVGRLCRVVNKYKSDFDVNIHRGTFWGNYVGKDAGSREAAIELFKKDFIRRIKSGEITKAHLEPLRGMRLGCTCKPKPCHGDIIAHIVNRLFKDDFQVEDLCN</sequence>